<accession>Q9ZUU4</accession>
<accession>Q7GA50</accession>
<accession>Q8L941</accession>
<keyword id="KW-0007">Acetylation</keyword>
<keyword id="KW-0150">Chloroplast</keyword>
<keyword id="KW-0507">mRNA processing</keyword>
<keyword id="KW-0597">Phosphoprotein</keyword>
<keyword id="KW-0934">Plastid</keyword>
<keyword id="KW-1185">Reference proteome</keyword>
<keyword id="KW-0677">Repeat</keyword>
<keyword id="KW-0687">Ribonucleoprotein</keyword>
<keyword id="KW-0694">RNA-binding</keyword>
<keyword id="KW-0809">Transit peptide</keyword>
<comment type="function">
    <text evidence="6">Could be involved in splicing and/or processing of chloroplast RNA's.</text>
</comment>
<comment type="subcellular location">
    <subcellularLocation>
        <location evidence="3">Plastid</location>
        <location evidence="3">Chloroplast</location>
    </subcellularLocation>
</comment>
<comment type="PTM">
    <text evidence="3">ADP-ribosylated by the Pseudomonas syringae type III effector HopU1. ADP-ribosylation reduces the ability of the protein to bind RNA.</text>
</comment>
<comment type="PTM">
    <text evidence="4">Phosphorylated on tyrosine residues after treatment with abscisic acid (ABA). Phosphorylation may reduce the ability of the protein to bind RNA.</text>
</comment>
<sequence length="289" mass="30718">MAASASSLALSSFNPKSLPFGVSRPASVSLLSPSLSFKLNSDSVSFSIAAKWNSPASRFARNVAITSEFEVEEDGFADVAPPKEQSFSADLKLFVGNLPFNVDSAQLAQLFESAGNVEMVEVIYDKITGRSRGFGFVTMSSVSEVEAAAQQFNGYELDGRPLRVNAGPPPPKREDGFSRGPRSSFGSSGSGYGGGGGSGAGSGNRVYVGNLSWGVDDMALESLFSEQGKVVEARVIYDRDSGRSKGFGFVTYDSSQEVQNAIKSLDGADLDGRQIRVSEAEARPPRRQY</sequence>
<proteinExistence type="evidence at protein level"/>
<organism>
    <name type="scientific">Arabidopsis thaliana</name>
    <name type="common">Mouse-ear cress</name>
    <dbReference type="NCBI Taxonomy" id="3702"/>
    <lineage>
        <taxon>Eukaryota</taxon>
        <taxon>Viridiplantae</taxon>
        <taxon>Streptophyta</taxon>
        <taxon>Embryophyta</taxon>
        <taxon>Tracheophyta</taxon>
        <taxon>Spermatophyta</taxon>
        <taxon>Magnoliopsida</taxon>
        <taxon>eudicotyledons</taxon>
        <taxon>Gunneridae</taxon>
        <taxon>Pentapetalae</taxon>
        <taxon>rosids</taxon>
        <taxon>malvids</taxon>
        <taxon>Brassicales</taxon>
        <taxon>Brassicaceae</taxon>
        <taxon>Camelineae</taxon>
        <taxon>Arabidopsis</taxon>
    </lineage>
</organism>
<reference key="1">
    <citation type="journal article" date="1999" name="Nature">
        <title>Sequence and analysis of chromosome 2 of the plant Arabidopsis thaliana.</title>
        <authorList>
            <person name="Lin X."/>
            <person name="Kaul S."/>
            <person name="Rounsley S.D."/>
            <person name="Shea T.P."/>
            <person name="Benito M.-I."/>
            <person name="Town C.D."/>
            <person name="Fujii C.Y."/>
            <person name="Mason T.M."/>
            <person name="Bowman C.L."/>
            <person name="Barnstead M.E."/>
            <person name="Feldblyum T.V."/>
            <person name="Buell C.R."/>
            <person name="Ketchum K.A."/>
            <person name="Lee J.J."/>
            <person name="Ronning C.M."/>
            <person name="Koo H.L."/>
            <person name="Moffat K.S."/>
            <person name="Cronin L.A."/>
            <person name="Shen M."/>
            <person name="Pai G."/>
            <person name="Van Aken S."/>
            <person name="Umayam L."/>
            <person name="Tallon L.J."/>
            <person name="Gill J.E."/>
            <person name="Adams M.D."/>
            <person name="Carrera A.J."/>
            <person name="Creasy T.H."/>
            <person name="Goodman H.M."/>
            <person name="Somerville C.R."/>
            <person name="Copenhaver G.P."/>
            <person name="Preuss D."/>
            <person name="Nierman W.C."/>
            <person name="White O."/>
            <person name="Eisen J.A."/>
            <person name="Salzberg S.L."/>
            <person name="Fraser C.M."/>
            <person name="Venter J.C."/>
        </authorList>
    </citation>
    <scope>NUCLEOTIDE SEQUENCE [LARGE SCALE GENOMIC DNA]</scope>
    <source>
        <strain>cv. Columbia</strain>
    </source>
</reference>
<reference key="2">
    <citation type="journal article" date="2017" name="Plant J.">
        <title>Araport11: a complete reannotation of the Arabidopsis thaliana reference genome.</title>
        <authorList>
            <person name="Cheng C.Y."/>
            <person name="Krishnakumar V."/>
            <person name="Chan A.P."/>
            <person name="Thibaud-Nissen F."/>
            <person name="Schobel S."/>
            <person name="Town C.D."/>
        </authorList>
    </citation>
    <scope>GENOME REANNOTATION</scope>
    <source>
        <strain>cv. Columbia</strain>
    </source>
</reference>
<reference key="3">
    <citation type="journal article" date="2003" name="Science">
        <title>Empirical analysis of transcriptional activity in the Arabidopsis genome.</title>
        <authorList>
            <person name="Yamada K."/>
            <person name="Lim J."/>
            <person name="Dale J.M."/>
            <person name="Chen H."/>
            <person name="Shinn P."/>
            <person name="Palm C.J."/>
            <person name="Southwick A.M."/>
            <person name="Wu H.C."/>
            <person name="Kim C.J."/>
            <person name="Nguyen M."/>
            <person name="Pham P.K."/>
            <person name="Cheuk R.F."/>
            <person name="Karlin-Newmann G."/>
            <person name="Liu S.X."/>
            <person name="Lam B."/>
            <person name="Sakano H."/>
            <person name="Wu T."/>
            <person name="Yu G."/>
            <person name="Miranda M."/>
            <person name="Quach H.L."/>
            <person name="Tripp M."/>
            <person name="Chang C.H."/>
            <person name="Lee J.M."/>
            <person name="Toriumi M.J."/>
            <person name="Chan M.M."/>
            <person name="Tang C.C."/>
            <person name="Onodera C.S."/>
            <person name="Deng J.M."/>
            <person name="Akiyama K."/>
            <person name="Ansari Y."/>
            <person name="Arakawa T."/>
            <person name="Banh J."/>
            <person name="Banno F."/>
            <person name="Bowser L."/>
            <person name="Brooks S.Y."/>
            <person name="Carninci P."/>
            <person name="Chao Q."/>
            <person name="Choy N."/>
            <person name="Enju A."/>
            <person name="Goldsmith A.D."/>
            <person name="Gurjal M."/>
            <person name="Hansen N.F."/>
            <person name="Hayashizaki Y."/>
            <person name="Johnson-Hopson C."/>
            <person name="Hsuan V.W."/>
            <person name="Iida K."/>
            <person name="Karnes M."/>
            <person name="Khan S."/>
            <person name="Koesema E."/>
            <person name="Ishida J."/>
            <person name="Jiang P.X."/>
            <person name="Jones T."/>
            <person name="Kawai J."/>
            <person name="Kamiya A."/>
            <person name="Meyers C."/>
            <person name="Nakajima M."/>
            <person name="Narusaka M."/>
            <person name="Seki M."/>
            <person name="Sakurai T."/>
            <person name="Satou M."/>
            <person name="Tamse R."/>
            <person name="Vaysberg M."/>
            <person name="Wallender E.K."/>
            <person name="Wong C."/>
            <person name="Yamamura Y."/>
            <person name="Yuan S."/>
            <person name="Shinozaki K."/>
            <person name="Davis R.W."/>
            <person name="Theologis A."/>
            <person name="Ecker J.R."/>
        </authorList>
    </citation>
    <scope>NUCLEOTIDE SEQUENCE [LARGE SCALE MRNA]</scope>
    <source>
        <strain>cv. Columbia</strain>
    </source>
</reference>
<reference key="4">
    <citation type="submission" date="2002-03" db="EMBL/GenBank/DDBJ databases">
        <title>Full-length cDNA from Arabidopsis thaliana.</title>
        <authorList>
            <person name="Brover V.V."/>
            <person name="Troukhan M.E."/>
            <person name="Alexandrov N.A."/>
            <person name="Lu Y.-P."/>
            <person name="Flavell R.B."/>
            <person name="Feldmann K.A."/>
        </authorList>
    </citation>
    <scope>NUCLEOTIDE SEQUENCE [LARGE SCALE MRNA]</scope>
</reference>
<reference key="5">
    <citation type="journal article" date="2007" name="Nature">
        <title>A type III effector ADP-ribosylates RNA-binding proteins and quells plant immunity.</title>
        <authorList>
            <person name="Fu Z.Q."/>
            <person name="Guo M."/>
            <person name="Jeong B.R."/>
            <person name="Tian F."/>
            <person name="Elthon T.E."/>
            <person name="Cerny R.L."/>
            <person name="Staiger D."/>
            <person name="Alfano J.R."/>
        </authorList>
    </citation>
    <scope>IDENTIFICATION BY MASS SPECTROMETRY</scope>
    <scope>SUBCELLULAR LOCATION</scope>
    <scope>ADP-RIBOSYLATION</scope>
</reference>
<reference key="6">
    <citation type="journal article" date="2008" name="Plant Physiol.">
        <title>Protein tyrosine kinases and protein tyrosine phosphatases are involved in abscisic acid-dependent processes in Arabidopsis seeds and suspension cells.</title>
        <authorList>
            <person name="Ghelis T."/>
            <person name="Bolbach G."/>
            <person name="Clodic G."/>
            <person name="Habricot Y."/>
            <person name="Miginiac E."/>
            <person name="Sotta B."/>
            <person name="Jeannette E."/>
        </authorList>
    </citation>
    <scope>PHOSPHORYLATION</scope>
</reference>
<reference key="7">
    <citation type="journal article" date="2009" name="Plant Physiol.">
        <title>Large-scale Arabidopsis phosphoproteome profiling reveals novel chloroplast kinase substrates and phosphorylation networks.</title>
        <authorList>
            <person name="Reiland S."/>
            <person name="Messerli G."/>
            <person name="Baerenfaller K."/>
            <person name="Gerrits B."/>
            <person name="Endler A."/>
            <person name="Grossmann J."/>
            <person name="Gruissem W."/>
            <person name="Baginsky S."/>
        </authorList>
    </citation>
    <scope>IDENTIFICATION BY MASS SPECTROMETRY [LARGE SCALE ANALYSIS]</scope>
</reference>
<reference key="8">
    <citation type="journal article" date="2012" name="Mol. Cell. Proteomics">
        <title>Comparative large-scale characterisation of plant vs. mammal proteins reveals similar and idiosyncratic N-alpha acetylation features.</title>
        <authorList>
            <person name="Bienvenut W.V."/>
            <person name="Sumpton D."/>
            <person name="Martinez A."/>
            <person name="Lilla S."/>
            <person name="Espagne C."/>
            <person name="Meinnel T."/>
            <person name="Giglione C."/>
        </authorList>
    </citation>
    <scope>ACETYLATION [LARGE SCALE ANALYSIS] AT VAL-63</scope>
    <scope>CLEAVAGE OF TRANSIT PEPTIDE [LARGE SCALE ANALYSIS] AFTER ASN-62</scope>
    <scope>IDENTIFICATION BY MASS SPECTROMETRY [LARGE SCALE ANALYSIS]</scope>
</reference>
<reference key="9">
    <citation type="journal article" date="2015" name="FEBS Lett.">
        <title>Arabidopsis Yak1 protein (AtYak1) is a dual specificity protein kinase.</title>
        <authorList>
            <person name="Kim D."/>
            <person name="Ntui V.O."/>
            <person name="Zhang N."/>
            <person name="Xiong L."/>
        </authorList>
    </citation>
    <scope>IDENTIFICATION BY MASS SPECTROMETRY</scope>
    <scope>PHOSPHORYLATION AT SER-6 AND SER-12</scope>
</reference>
<evidence type="ECO:0000255" key="1">
    <source>
        <dbReference type="PROSITE-ProRule" id="PRU00176"/>
    </source>
</evidence>
<evidence type="ECO:0000256" key="2">
    <source>
        <dbReference type="SAM" id="MobiDB-lite"/>
    </source>
</evidence>
<evidence type="ECO:0000269" key="3">
    <source>
    </source>
</evidence>
<evidence type="ECO:0000269" key="4">
    <source>
    </source>
</evidence>
<evidence type="ECO:0000269" key="5">
    <source>
    </source>
</evidence>
<evidence type="ECO:0000305" key="6"/>
<evidence type="ECO:0007744" key="7">
    <source>
    </source>
</evidence>
<dbReference type="EMBL" id="AC005896">
    <property type="protein sequence ID" value="AAC98043.1"/>
    <property type="molecule type" value="Genomic_DNA"/>
</dbReference>
<dbReference type="EMBL" id="AC006260">
    <property type="protein sequence ID" value="AAM15222.1"/>
    <property type="molecule type" value="Genomic_DNA"/>
</dbReference>
<dbReference type="EMBL" id="CP002685">
    <property type="protein sequence ID" value="AEC09369.1"/>
    <property type="molecule type" value="Genomic_DNA"/>
</dbReference>
<dbReference type="EMBL" id="AF370167">
    <property type="protein sequence ID" value="AAK43982.1"/>
    <property type="molecule type" value="mRNA"/>
</dbReference>
<dbReference type="EMBL" id="AY048251">
    <property type="protein sequence ID" value="AAK82513.1"/>
    <property type="molecule type" value="mRNA"/>
</dbReference>
<dbReference type="EMBL" id="AY059129">
    <property type="protein sequence ID" value="AAL15235.1"/>
    <property type="molecule type" value="mRNA"/>
</dbReference>
<dbReference type="EMBL" id="AY088648">
    <property type="protein sequence ID" value="AAM66970.1"/>
    <property type="molecule type" value="mRNA"/>
</dbReference>
<dbReference type="PIR" id="A84790">
    <property type="entry name" value="A84790"/>
</dbReference>
<dbReference type="RefSeq" id="NP_181259.1">
    <property type="nucleotide sequence ID" value="NM_129278.4"/>
</dbReference>
<dbReference type="SMR" id="Q9ZUU4"/>
<dbReference type="BioGRID" id="3643">
    <property type="interactions" value="2"/>
</dbReference>
<dbReference type="FunCoup" id="Q9ZUU4">
    <property type="interactions" value="2153"/>
</dbReference>
<dbReference type="IntAct" id="Q9ZUU4">
    <property type="interactions" value="2"/>
</dbReference>
<dbReference type="MINT" id="Q9ZUU4"/>
<dbReference type="STRING" id="3702.Q9ZUU4"/>
<dbReference type="iPTMnet" id="Q9ZUU4"/>
<dbReference type="PaxDb" id="3702-AT2G37220.1"/>
<dbReference type="ProteomicsDB" id="220549"/>
<dbReference type="EnsemblPlants" id="AT2G37220.1">
    <property type="protein sequence ID" value="AT2G37220.1"/>
    <property type="gene ID" value="AT2G37220"/>
</dbReference>
<dbReference type="GeneID" id="818299"/>
<dbReference type="Gramene" id="AT2G37220.1">
    <property type="protein sequence ID" value="AT2G37220.1"/>
    <property type="gene ID" value="AT2G37220"/>
</dbReference>
<dbReference type="KEGG" id="ath:AT2G37220"/>
<dbReference type="Araport" id="AT2G37220"/>
<dbReference type="TAIR" id="AT2G37220"/>
<dbReference type="eggNOG" id="KOG0118">
    <property type="taxonomic scope" value="Eukaryota"/>
</dbReference>
<dbReference type="HOGENOM" id="CLU_012062_15_1_1"/>
<dbReference type="InParanoid" id="Q9ZUU4"/>
<dbReference type="OMA" id="NDECTIF"/>
<dbReference type="OrthoDB" id="439808at2759"/>
<dbReference type="PhylomeDB" id="Q9ZUU4"/>
<dbReference type="CD-CODE" id="4299E36E">
    <property type="entry name" value="Nucleolus"/>
</dbReference>
<dbReference type="PRO" id="PR:Q9ZUU4"/>
<dbReference type="Proteomes" id="UP000006548">
    <property type="component" value="Chromosome 2"/>
</dbReference>
<dbReference type="ExpressionAtlas" id="Q9ZUU4">
    <property type="expression patterns" value="baseline and differential"/>
</dbReference>
<dbReference type="GO" id="GO:0009507">
    <property type="term" value="C:chloroplast"/>
    <property type="evidence" value="ECO:0007005"/>
    <property type="project" value="TAIR"/>
</dbReference>
<dbReference type="GO" id="GO:0009941">
    <property type="term" value="C:chloroplast envelope"/>
    <property type="evidence" value="ECO:0007005"/>
    <property type="project" value="TAIR"/>
</dbReference>
<dbReference type="GO" id="GO:0009570">
    <property type="term" value="C:chloroplast stroma"/>
    <property type="evidence" value="ECO:0007005"/>
    <property type="project" value="TAIR"/>
</dbReference>
<dbReference type="GO" id="GO:0009534">
    <property type="term" value="C:chloroplast thylakoid"/>
    <property type="evidence" value="ECO:0007005"/>
    <property type="project" value="TAIR"/>
</dbReference>
<dbReference type="GO" id="GO:0009535">
    <property type="term" value="C:chloroplast thylakoid membrane"/>
    <property type="evidence" value="ECO:0007005"/>
    <property type="project" value="TAIR"/>
</dbReference>
<dbReference type="GO" id="GO:0005783">
    <property type="term" value="C:endoplasmic reticulum"/>
    <property type="evidence" value="ECO:0007005"/>
    <property type="project" value="TAIR"/>
</dbReference>
<dbReference type="GO" id="GO:1990904">
    <property type="term" value="C:ribonucleoprotein complex"/>
    <property type="evidence" value="ECO:0007669"/>
    <property type="project" value="UniProtKB-KW"/>
</dbReference>
<dbReference type="GO" id="GO:0010319">
    <property type="term" value="C:stromule"/>
    <property type="evidence" value="ECO:0000314"/>
    <property type="project" value="TAIR"/>
</dbReference>
<dbReference type="GO" id="GO:0009579">
    <property type="term" value="C:thylakoid"/>
    <property type="evidence" value="ECO:0007005"/>
    <property type="project" value="TAIR"/>
</dbReference>
<dbReference type="GO" id="GO:0003729">
    <property type="term" value="F:mRNA binding"/>
    <property type="evidence" value="ECO:0000314"/>
    <property type="project" value="TAIR"/>
</dbReference>
<dbReference type="GO" id="GO:0008266">
    <property type="term" value="F:poly(U) RNA binding"/>
    <property type="evidence" value="ECO:0000314"/>
    <property type="project" value="TAIR"/>
</dbReference>
<dbReference type="GO" id="GO:0045087">
    <property type="term" value="P:innate immune response"/>
    <property type="evidence" value="ECO:0000314"/>
    <property type="project" value="TAIR"/>
</dbReference>
<dbReference type="GO" id="GO:0006397">
    <property type="term" value="P:mRNA processing"/>
    <property type="evidence" value="ECO:0007669"/>
    <property type="project" value="UniProtKB-KW"/>
</dbReference>
<dbReference type="GO" id="GO:0009737">
    <property type="term" value="P:response to abscisic acid"/>
    <property type="evidence" value="ECO:0000270"/>
    <property type="project" value="TAIR"/>
</dbReference>
<dbReference type="GO" id="GO:0009409">
    <property type="term" value="P:response to cold"/>
    <property type="evidence" value="ECO:0000270"/>
    <property type="project" value="TAIR"/>
</dbReference>
<dbReference type="CDD" id="cd21608">
    <property type="entry name" value="RRM2_NsCP33_like"/>
    <property type="match status" value="1"/>
</dbReference>
<dbReference type="FunFam" id="3.30.70.330:FF:000357">
    <property type="entry name" value="Ribonucleoprotein A, chloroplastic"/>
    <property type="match status" value="1"/>
</dbReference>
<dbReference type="FunFam" id="3.30.70.330:FF:000423">
    <property type="entry name" value="Ribonucleoprotein A, chloroplastic"/>
    <property type="match status" value="1"/>
</dbReference>
<dbReference type="Gene3D" id="3.30.70.330">
    <property type="match status" value="2"/>
</dbReference>
<dbReference type="InterPro" id="IPR050502">
    <property type="entry name" value="Euk_RNA-bind_prot"/>
</dbReference>
<dbReference type="InterPro" id="IPR012677">
    <property type="entry name" value="Nucleotide-bd_a/b_plait_sf"/>
</dbReference>
<dbReference type="InterPro" id="IPR035979">
    <property type="entry name" value="RBD_domain_sf"/>
</dbReference>
<dbReference type="InterPro" id="IPR048289">
    <property type="entry name" value="RRM2_NsCP33-like"/>
</dbReference>
<dbReference type="InterPro" id="IPR000504">
    <property type="entry name" value="RRM_dom"/>
</dbReference>
<dbReference type="PANTHER" id="PTHR48025">
    <property type="entry name" value="OS02G0815200 PROTEIN"/>
    <property type="match status" value="1"/>
</dbReference>
<dbReference type="PANTHER" id="PTHR48025:SF1">
    <property type="entry name" value="RRM DOMAIN-CONTAINING PROTEIN"/>
    <property type="match status" value="1"/>
</dbReference>
<dbReference type="Pfam" id="PF00076">
    <property type="entry name" value="RRM_1"/>
    <property type="match status" value="2"/>
</dbReference>
<dbReference type="SMART" id="SM00360">
    <property type="entry name" value="RRM"/>
    <property type="match status" value="2"/>
</dbReference>
<dbReference type="SUPFAM" id="SSF54928">
    <property type="entry name" value="RNA-binding domain, RBD"/>
    <property type="match status" value="2"/>
</dbReference>
<dbReference type="PROSITE" id="PS50102">
    <property type="entry name" value="RRM"/>
    <property type="match status" value="2"/>
</dbReference>
<feature type="transit peptide" description="Chloroplast" evidence="7">
    <location>
        <begin position="1"/>
        <end position="62"/>
    </location>
</feature>
<feature type="chain" id="PRO_0000031019" description="RNA-binding protein CP29B, chloroplastic">
    <location>
        <begin position="63"/>
        <end position="289"/>
    </location>
</feature>
<feature type="domain" description="RRM 1" evidence="1">
    <location>
        <begin position="91"/>
        <end position="169"/>
    </location>
</feature>
<feature type="domain" description="RRM 2" evidence="1">
    <location>
        <begin position="204"/>
        <end position="282"/>
    </location>
</feature>
<feature type="region of interest" description="Disordered" evidence="2">
    <location>
        <begin position="158"/>
        <end position="199"/>
    </location>
</feature>
<feature type="region of interest" description="Linker (Gly-rich)">
    <location>
        <begin position="170"/>
        <end position="203"/>
    </location>
</feature>
<feature type="compositionally biased region" description="Low complexity" evidence="2">
    <location>
        <begin position="178"/>
        <end position="187"/>
    </location>
</feature>
<feature type="compositionally biased region" description="Gly residues" evidence="2">
    <location>
        <begin position="188"/>
        <end position="199"/>
    </location>
</feature>
<feature type="modified residue" description="Phosphoserine" evidence="5">
    <location>
        <position position="6"/>
    </location>
</feature>
<feature type="modified residue" description="Phosphoserine" evidence="5">
    <location>
        <position position="12"/>
    </location>
</feature>
<feature type="modified residue" description="N-acetylvaline" evidence="7">
    <location>
        <position position="63"/>
    </location>
</feature>
<feature type="sequence conflict" description="In Ref. 4; AAM66970." evidence="6" ref="4">
    <original>A</original>
    <variation>V</variation>
    <location>
        <position position="60"/>
    </location>
</feature>
<protein>
    <recommendedName>
        <fullName evidence="6">RNA-binding protein CP29B, chloroplastic</fullName>
    </recommendedName>
    <alternativeName>
        <fullName>Ribonucleoprotein At2g37220</fullName>
    </alternativeName>
</protein>
<gene>
    <name evidence="6" type="primary">CP29B</name>
    <name type="ordered locus">At2g37220</name>
    <name type="ORF">F3G5.1</name>
</gene>
<name>CP29B_ARATH</name>